<gene>
    <name evidence="1" type="primary">atpG</name>
    <name type="ordered locus">Daro_4113</name>
</gene>
<name>ATPG_DECAR</name>
<accession>Q477Z2</accession>
<reference key="1">
    <citation type="journal article" date="2009" name="BMC Genomics">
        <title>Metabolic analysis of the soil microbe Dechloromonas aromatica str. RCB: indications of a surprisingly complex life-style and cryptic anaerobic pathways for aromatic degradation.</title>
        <authorList>
            <person name="Salinero K.K."/>
            <person name="Keller K."/>
            <person name="Feil W.S."/>
            <person name="Feil H."/>
            <person name="Trong S."/>
            <person name="Di Bartolo G."/>
            <person name="Lapidus A."/>
        </authorList>
    </citation>
    <scope>NUCLEOTIDE SEQUENCE [LARGE SCALE GENOMIC DNA]</scope>
    <source>
        <strain>RCB</strain>
    </source>
</reference>
<protein>
    <recommendedName>
        <fullName evidence="1">ATP synthase gamma chain</fullName>
    </recommendedName>
    <alternativeName>
        <fullName evidence="1">ATP synthase F1 sector gamma subunit</fullName>
    </alternativeName>
    <alternativeName>
        <fullName evidence="1">F-ATPase gamma subunit</fullName>
    </alternativeName>
</protein>
<organism>
    <name type="scientific">Dechloromonas aromatica (strain RCB)</name>
    <dbReference type="NCBI Taxonomy" id="159087"/>
    <lineage>
        <taxon>Bacteria</taxon>
        <taxon>Pseudomonadati</taxon>
        <taxon>Pseudomonadota</taxon>
        <taxon>Betaproteobacteria</taxon>
        <taxon>Rhodocyclales</taxon>
        <taxon>Azonexaceae</taxon>
        <taxon>Dechloromonas</taxon>
    </lineage>
</organism>
<evidence type="ECO:0000255" key="1">
    <source>
        <dbReference type="HAMAP-Rule" id="MF_00815"/>
    </source>
</evidence>
<sequence length="286" mass="31388">MPSGKEIRNKIKSVENTRKITKAMEMVAASKMRKAQDRMRAARPYGEKIRRVAGNLSHALTEYRHPFLVNREQAAVGLILVTSDKGLCGGLNSNLLRVAVSKMKEFESQGKKLQATCIGNKGFGFMQRSGAKIVSHVTGLGDTPHLEKLIGAVKVQLDAYMNGEIDALYIGYTRFINTMKQEPVFEKLLPLSGDAVGSAKTKWDYVYEPEAKSVIDDLLIRYVEALIYQAVAENMASEQSARMVAMKSASDNAKTVIGDLKLVYNKARQAAITKELSEIVSGAAAV</sequence>
<dbReference type="EMBL" id="CP000089">
    <property type="protein sequence ID" value="AAZ48839.1"/>
    <property type="molecule type" value="Genomic_DNA"/>
</dbReference>
<dbReference type="SMR" id="Q477Z2"/>
<dbReference type="STRING" id="159087.Daro_4113"/>
<dbReference type="KEGG" id="dar:Daro_4113"/>
<dbReference type="eggNOG" id="COG0224">
    <property type="taxonomic scope" value="Bacteria"/>
</dbReference>
<dbReference type="HOGENOM" id="CLU_050669_0_1_4"/>
<dbReference type="OrthoDB" id="9812769at2"/>
<dbReference type="GO" id="GO:0005886">
    <property type="term" value="C:plasma membrane"/>
    <property type="evidence" value="ECO:0007669"/>
    <property type="project" value="UniProtKB-SubCell"/>
</dbReference>
<dbReference type="GO" id="GO:0045259">
    <property type="term" value="C:proton-transporting ATP synthase complex"/>
    <property type="evidence" value="ECO:0007669"/>
    <property type="project" value="UniProtKB-KW"/>
</dbReference>
<dbReference type="GO" id="GO:0005524">
    <property type="term" value="F:ATP binding"/>
    <property type="evidence" value="ECO:0007669"/>
    <property type="project" value="UniProtKB-UniRule"/>
</dbReference>
<dbReference type="GO" id="GO:0046933">
    <property type="term" value="F:proton-transporting ATP synthase activity, rotational mechanism"/>
    <property type="evidence" value="ECO:0007669"/>
    <property type="project" value="UniProtKB-UniRule"/>
</dbReference>
<dbReference type="GO" id="GO:0042777">
    <property type="term" value="P:proton motive force-driven plasma membrane ATP synthesis"/>
    <property type="evidence" value="ECO:0007669"/>
    <property type="project" value="UniProtKB-UniRule"/>
</dbReference>
<dbReference type="CDD" id="cd12151">
    <property type="entry name" value="F1-ATPase_gamma"/>
    <property type="match status" value="1"/>
</dbReference>
<dbReference type="FunFam" id="1.10.287.80:FF:000005">
    <property type="entry name" value="ATP synthase gamma chain"/>
    <property type="match status" value="1"/>
</dbReference>
<dbReference type="Gene3D" id="3.40.1380.10">
    <property type="match status" value="1"/>
</dbReference>
<dbReference type="Gene3D" id="1.10.287.80">
    <property type="entry name" value="ATP synthase, gamma subunit, helix hairpin domain"/>
    <property type="match status" value="1"/>
</dbReference>
<dbReference type="HAMAP" id="MF_00815">
    <property type="entry name" value="ATP_synth_gamma_bact"/>
    <property type="match status" value="1"/>
</dbReference>
<dbReference type="InterPro" id="IPR035968">
    <property type="entry name" value="ATP_synth_F1_ATPase_gsu"/>
</dbReference>
<dbReference type="InterPro" id="IPR000131">
    <property type="entry name" value="ATP_synth_F1_gsu"/>
</dbReference>
<dbReference type="InterPro" id="IPR023632">
    <property type="entry name" value="ATP_synth_F1_gsu_CS"/>
</dbReference>
<dbReference type="NCBIfam" id="TIGR01146">
    <property type="entry name" value="ATPsyn_F1gamma"/>
    <property type="match status" value="1"/>
</dbReference>
<dbReference type="NCBIfam" id="NF004144">
    <property type="entry name" value="PRK05621.1-1"/>
    <property type="match status" value="1"/>
</dbReference>
<dbReference type="PANTHER" id="PTHR11693">
    <property type="entry name" value="ATP SYNTHASE GAMMA CHAIN"/>
    <property type="match status" value="1"/>
</dbReference>
<dbReference type="PANTHER" id="PTHR11693:SF22">
    <property type="entry name" value="ATP SYNTHASE SUBUNIT GAMMA, MITOCHONDRIAL"/>
    <property type="match status" value="1"/>
</dbReference>
<dbReference type="Pfam" id="PF00231">
    <property type="entry name" value="ATP-synt"/>
    <property type="match status" value="1"/>
</dbReference>
<dbReference type="PRINTS" id="PR00126">
    <property type="entry name" value="ATPASEGAMMA"/>
</dbReference>
<dbReference type="SUPFAM" id="SSF52943">
    <property type="entry name" value="ATP synthase (F1-ATPase), gamma subunit"/>
    <property type="match status" value="1"/>
</dbReference>
<dbReference type="PROSITE" id="PS00153">
    <property type="entry name" value="ATPASE_GAMMA"/>
    <property type="match status" value="1"/>
</dbReference>
<proteinExistence type="inferred from homology"/>
<comment type="function">
    <text evidence="1">Produces ATP from ADP in the presence of a proton gradient across the membrane. The gamma chain is believed to be important in regulating ATPase activity and the flow of protons through the CF(0) complex.</text>
</comment>
<comment type="subunit">
    <text evidence="1">F-type ATPases have 2 components, CF(1) - the catalytic core - and CF(0) - the membrane proton channel. CF(1) has five subunits: alpha(3), beta(3), gamma(1), delta(1), epsilon(1). CF(0) has three main subunits: a, b and c.</text>
</comment>
<comment type="subcellular location">
    <subcellularLocation>
        <location evidence="1">Cell inner membrane</location>
        <topology evidence="1">Peripheral membrane protein</topology>
    </subcellularLocation>
</comment>
<comment type="similarity">
    <text evidence="1">Belongs to the ATPase gamma chain family.</text>
</comment>
<feature type="chain" id="PRO_0000073275" description="ATP synthase gamma chain">
    <location>
        <begin position="1"/>
        <end position="286"/>
    </location>
</feature>
<keyword id="KW-0066">ATP synthesis</keyword>
<keyword id="KW-0997">Cell inner membrane</keyword>
<keyword id="KW-1003">Cell membrane</keyword>
<keyword id="KW-0139">CF(1)</keyword>
<keyword id="KW-0375">Hydrogen ion transport</keyword>
<keyword id="KW-0406">Ion transport</keyword>
<keyword id="KW-0472">Membrane</keyword>
<keyword id="KW-0813">Transport</keyword>